<name>MRE11_MOUSE</name>
<gene>
    <name evidence="10 14" type="primary">Mre11</name>
    <name type="synonym">Mre11a</name>
</gene>
<sequence length="706" mass="80223">MSPTDPLDDEDTFKILVATDIHLGFMEKDAVRGNDTFVTFDEILRLALENEVDFILLGGDLFHENKPSRKTLHSCLELLRKYCMGDRPVQFEVISDQSVNFGFSKFPWVNYQDGNLNISIPVFSIHGNHDDPTGADALCALDVLSCAGFVNHFGRSMSVEKVDISPVLLQKGSTKLALYGLGSIPDERLYRMFVNKKVTMLRPKEDENSWFNLFVIHQNRSKHGNTNFIPEQFLDDFIDLVIWGHEHECKIGPIKNEQQLFYVSQPGSSVVTSLSPGEAVKKHVGLLRIKGRKMNMQKLPLRTVRRFFIEDVVLANHPNLFNPDNPKVTQAIQSFCLEKIEEMLDSAERERLGNPQQPGKPLIRLRVDYSGGFEPFNVLRFSQKFVDRVANPKDVIHFFRHREQKGKTGEEINFGMLITKPASEGATLRVEDLVKQYFQTAEKNVQLSLLTERGMGEAVQEFVDKEEKDAIEELVKYQLEKTQRFLKERHIDALEDKIDEEVRRFRESRQRNTNEEDDEVREAMSRARALRSQSETSTSAFSAEDLSFDTSEQTANDSDDSLSAVPSRGRGRGRGRRGARGQSSAPRGGSQRGRDTGLEITTRGRSSKATSSTSRNMSIIDAFRSTRQQPSRNVAPKNYSETIEVDDSDEDDIFPTNSRADQRWSGTTSSKRMSQSQTAKGVDFESDEDDDDDPFMSSSCPRRNRR</sequence>
<comment type="function">
    <text evidence="1 3 4 5 6 8">Core component of the MRN complex, which plays a central role in double-strand break (DSB) repair, DNA recombination, maintenance of telomere integrity and meiosis (PubMed:14690604, PubMed:17291760, PubMed:18854157). The MRN complex is involved in the repair of DNA double-strand breaks (DSBs) via homologous recombination (HR), an error-free mechanism which primarily occurs during S and G2 phases (PubMed:18854157). The complex (1) mediates the end resection of damaged DNA, which generates proper single-stranded DNA, a key initial steps in HR, and is (2) required for the recruitment of other repair factors and efficient activation of ATM and ATR upon DNA damage (PubMed:14690604, PubMed:18854157). Within the MRN complex, MRE11 possesses both single-strand endonuclease activity and double-strand-specific 3'-5' exonuclease activity (PubMed:18854157). After DSBs, MRE11 is loaded onto DSBs sites and cleaves DNA by cooperating with RBBP8/CtIP to initiate end resection (By similarity). MRE11 first endonucleolytically cleaves the 5' strand at DNA DSB ends to prevent non-homologous end joining (NHEJ) and licence HR (By similarity). It then generates a single-stranded DNA gap via 3' to 5' exonucleolytic degradation to create entry sites for EXO1- and DNA2-mediated 5' to 3' long-range resection, which is required for single-strand invasion and recombination (By similarity). RBBP8/CtIP specifically promotes the endonuclease activity of MRE11 to clear protein-DNA adducts and generate clean double-strand break ends (By similarity). MRE11 endonuclease activity is also enhanced by AGER/RAGE (PubMed:28977635). The MRN complex is also required for DNA damage signaling via activation of the ATM and ATR kinases: the nuclease activity of MRE11 is not required to activate ATM and ATR (PubMed:18854157). The MRN complex is also required for the processing of R-loops (By similarity). The MRN complex is involved in the activation of the cGAS-STING pathway induced by DNA damage during tumorigenesis: the MRN complex acts by displacing CGAS from nucleosome sequestration, thereby activating it (PubMed:38200309). In telomeres the MRN complex may modulate t-loop formation (By similarity).</text>
</comment>
<comment type="cofactor">
    <cofactor evidence="1">
        <name>Mn(2+)</name>
        <dbReference type="ChEBI" id="CHEBI:29035"/>
    </cofactor>
</comment>
<comment type="activity regulation">
    <text evidence="1">Interaction with SAMHD1 stimulates the double-strand-specific 3'-5' exonuclease activity. RBBP8/CtIP specifically promotes the endonuclease activity to clear protein-DNA adducts and generate clean double-strand break ends. DYNLL1-binding inhibits the activity of MRE11. MRE11 activity is inhibited by C1QBP: in absence of DNA damage, C1QBP interacts with unphosphorylated MRE11, preventing formation and activity of the MRN complex.</text>
</comment>
<comment type="subunit">
    <text evidence="1 6 7">Component of the MRN complex composed of two heterodimers RAD50 and MRE11 associated with a single NBN (By similarity). The MRN complexes dimerize on DNA to form joined MRN-MRN oligomers required for DNA double-strand break repair (By similarity). As part of the MRN complex, interacts with MCM9; the interaction recruits the complex to DNA repair sites (By similarity). Component of the BASC complex, at least composed of BRCA1, MSH2, MSH6, MLH1, ATM, BLM, RAD50, MRE11 and NBN (By similarity). Found in a complex with TERF2 (By similarity). Interacts with DCLRE1C/Artemis and DCLRE1B/Apollo (By similarity). Interacts with ATF2 (By similarity). Interacts with EXD2 (By similarity). Interacts with MRNIP (By similarity). Interacts with SAMHD1; leading to stimulate 3'-5' exonuclease activity (By similarity). Interacts (when ubiquitinated) with UBQLN4 (via its UBA domain) (By similarity). Interacts with CYREN (via XLF motif) (PubMed:30017584). Interacts with GFI1; promoting methylation by PRMT1 (By similarity). Interacts with DYNLL1; inhibiting the activity of MRE11 (By similarity). Interacts with C1QBP and RAD50; interaction takes place in absence of DNA damage to form the MRC (MRE11-RAD50-C1QBP) complex that inhibits the activity of MRE11 (By similarity). Interacts with AGER/RAGE; AGER is recruited to DNA double-strand break sites where it enhances MRE11 endonuclease activity to promote DNA repair (PubMed:28977635).</text>
</comment>
<comment type="interaction">
    <interactant intactId="EBI-2014813">
        <id>Q61216</id>
    </interactant>
    <interactant intactId="EBI-2014862">
        <id>Q9R207</id>
        <label>Nbn</label>
    </interactant>
    <organismsDiffer>false</organismsDiffer>
    <experiments>2</experiments>
</comment>
<comment type="subcellular location">
    <subcellularLocation>
        <location evidence="1">Nucleus</location>
    </subcellularLocation>
    <subcellularLocation>
        <location evidence="1">Chromosome</location>
    </subcellularLocation>
    <subcellularLocation>
        <location evidence="1">Chromosome</location>
        <location evidence="1">Telomere</location>
    </subcellularLocation>
    <text evidence="1">Localizes to DNA double-strand breaks (DSBs).</text>
</comment>
<comment type="alternative products">
    <event type="alternative splicing"/>
    <isoform>
        <id>Q61216-1</id>
        <name>1</name>
        <name>A</name>
        <sequence type="displayed"/>
    </isoform>
    <isoform>
        <id>Q61216-2</id>
        <name>2</name>
        <name>B</name>
        <sequence type="described" ref="VSP_003263"/>
    </isoform>
</comment>
<comment type="PTM">
    <text evidence="1">Phosphorylated by ATM at Ser-674 and Ser-676 in response to DNA damage, promoting MRE11 activity: phosphorylation activates MRE11 by preventing the interaction between MRE11 and the C1QBP inhibitor (By similarity). Phosphorylation at Ser-648 by PLK1 primes for phosphorylation at Ser-686 by CK2, inhibiting recruitment of the MRN complex to DNA damage sites (By similarity).</text>
</comment>
<comment type="PTM">
    <text evidence="1">Asymmetric dimethylation by PRMT1 promotes MRE11 exonuclease activity.</text>
</comment>
<comment type="PTM">
    <text evidence="1">Lactylation at Lys-671 by CREBBP/CBP in response to DNA damage promotes DNA binding and MRE11 activity.</text>
</comment>
<comment type="PTM">
    <text evidence="1">Acetylated on lysine residues by KAT2A /GCN5.</text>
</comment>
<comment type="PTM">
    <text evidence="1">Ubiquitinated following DNA damage. Ubiquitination triggers interaction with UBQLN4, leading to MRE11 removal from chromatin and degradation by the proteasome. Ubiquitinated at Lys-339 and Lys-481 by RNF126 via 'Lys-27'- and 'Lys-29'-linked polyubiquitin chains, promoting the exonuclease activity of MRE11.</text>
</comment>
<comment type="PTM">
    <text evidence="1">SUMOylated by PIAS1, stabilizing MRE11 on chromatin during end resection. DeSUMOylated by SENP3 following removal from DNA double-strand breaks (DSBs).</text>
</comment>
<comment type="PTM">
    <text evidence="1">Ufmylation at Lys-282 promotes MRE11 activity and is required for activation of the ATM and ATR kinases by the MRN complex.</text>
</comment>
<comment type="disruption phenotype">
    <text evidence="5 9">Early embryonic lethality.</text>
</comment>
<comment type="similarity">
    <text evidence="12">Belongs to the MRE11/RAD32 family.</text>
</comment>
<protein>
    <recommendedName>
        <fullName evidence="12">Double-strand break repair protein MRE11</fullName>
        <ecNumber evidence="5">3.1.-.-</ecNumber>
    </recommendedName>
    <alternativeName>
        <fullName>Meiotic recombination 11 homolog 1</fullName>
        <shortName>MRE11 homolog 1</shortName>
    </alternativeName>
    <alternativeName>
        <fullName>Meiotic recombination 11 homolog A</fullName>
        <shortName>MRE11 homolog A</shortName>
        <shortName>MmMRE11A</shortName>
    </alternativeName>
</protein>
<accession>Q61216</accession>
<accession>Q62430</accession>
<evidence type="ECO:0000250" key="1">
    <source>
        <dbReference type="UniProtKB" id="P49959"/>
    </source>
</evidence>
<evidence type="ECO:0000256" key="2">
    <source>
        <dbReference type="SAM" id="MobiDB-lite"/>
    </source>
</evidence>
<evidence type="ECO:0000269" key="3">
    <source>
    </source>
</evidence>
<evidence type="ECO:0000269" key="4">
    <source>
    </source>
</evidence>
<evidence type="ECO:0000269" key="5">
    <source>
    </source>
</evidence>
<evidence type="ECO:0000269" key="6">
    <source>
    </source>
</evidence>
<evidence type="ECO:0000269" key="7">
    <source>
    </source>
</evidence>
<evidence type="ECO:0000269" key="8">
    <source>
    </source>
</evidence>
<evidence type="ECO:0000269" key="9">
    <source>
    </source>
</evidence>
<evidence type="ECO:0000303" key="10">
    <source>
    </source>
</evidence>
<evidence type="ECO:0000303" key="11">
    <source ref="1"/>
</evidence>
<evidence type="ECO:0000305" key="12"/>
<evidence type="ECO:0000305" key="13">
    <source>
    </source>
</evidence>
<evidence type="ECO:0000312" key="14">
    <source>
        <dbReference type="MGI" id="MGI:1100512"/>
    </source>
</evidence>
<evidence type="ECO:0007744" key="15">
    <source>
    </source>
</evidence>
<evidence type="ECO:0007744" key="16">
    <source>
    </source>
</evidence>
<keyword id="KW-0007">Acetylation</keyword>
<keyword id="KW-0025">Alternative splicing</keyword>
<keyword id="KW-0158">Chromosome</keyword>
<keyword id="KW-0227">DNA damage</keyword>
<keyword id="KW-0234">DNA repair</keyword>
<keyword id="KW-0255">Endonuclease</keyword>
<keyword id="KW-0269">Exonuclease</keyword>
<keyword id="KW-0378">Hydrolase</keyword>
<keyword id="KW-1017">Isopeptide bond</keyword>
<keyword id="KW-0464">Manganese</keyword>
<keyword id="KW-0469">Meiosis</keyword>
<keyword id="KW-0479">Metal-binding</keyword>
<keyword id="KW-0488">Methylation</keyword>
<keyword id="KW-0540">Nuclease</keyword>
<keyword id="KW-0539">Nucleus</keyword>
<keyword id="KW-0597">Phosphoprotein</keyword>
<keyword id="KW-1185">Reference proteome</keyword>
<keyword id="KW-0779">Telomere</keyword>
<keyword id="KW-0832">Ubl conjugation</keyword>
<feature type="initiator methionine" description="Removed" evidence="1">
    <location>
        <position position="1"/>
    </location>
</feature>
<feature type="chain" id="PRO_0000138674" description="Double-strand break repair protein MRE11">
    <location>
        <begin position="2"/>
        <end position="706"/>
    </location>
</feature>
<feature type="region of interest" description="Interaction with NBN" evidence="1">
    <location>
        <begin position="87"/>
        <end position="117"/>
    </location>
</feature>
<feature type="region of interest" description="Disordered" evidence="2">
    <location>
        <begin position="505"/>
        <end position="706"/>
    </location>
</feature>
<feature type="short sequence motif" description="GAR" evidence="1">
    <location>
        <begin position="570"/>
        <end position="594"/>
    </location>
</feature>
<feature type="compositionally biased region" description="Basic and acidic residues" evidence="2">
    <location>
        <begin position="505"/>
        <end position="514"/>
    </location>
</feature>
<feature type="compositionally biased region" description="Polar residues" evidence="2">
    <location>
        <begin position="531"/>
        <end position="541"/>
    </location>
</feature>
<feature type="compositionally biased region" description="Basic residues" evidence="2">
    <location>
        <begin position="569"/>
        <end position="579"/>
    </location>
</feature>
<feature type="compositionally biased region" description="Low complexity" evidence="2">
    <location>
        <begin position="580"/>
        <end position="589"/>
    </location>
</feature>
<feature type="compositionally biased region" description="Polar residues" evidence="2">
    <location>
        <begin position="603"/>
        <end position="617"/>
    </location>
</feature>
<feature type="compositionally biased region" description="Acidic residues" evidence="2">
    <location>
        <begin position="643"/>
        <end position="653"/>
    </location>
</feature>
<feature type="compositionally biased region" description="Polar residues" evidence="2">
    <location>
        <begin position="655"/>
        <end position="679"/>
    </location>
</feature>
<feature type="compositionally biased region" description="Acidic residues" evidence="2">
    <location>
        <begin position="684"/>
        <end position="694"/>
    </location>
</feature>
<feature type="active site" description="Proton donor" evidence="13">
    <location>
        <position position="129"/>
    </location>
</feature>
<feature type="binding site" evidence="1">
    <location>
        <position position="20"/>
    </location>
    <ligand>
        <name>Mn(2+)</name>
        <dbReference type="ChEBI" id="CHEBI:29035"/>
        <label>1</label>
    </ligand>
</feature>
<feature type="binding site" evidence="1">
    <location>
        <position position="22"/>
    </location>
    <ligand>
        <name>Mn(2+)</name>
        <dbReference type="ChEBI" id="CHEBI:29035"/>
        <label>1</label>
    </ligand>
</feature>
<feature type="binding site" evidence="1">
    <location>
        <position position="60"/>
    </location>
    <ligand>
        <name>Mn(2+)</name>
        <dbReference type="ChEBI" id="CHEBI:29035"/>
        <label>1</label>
    </ligand>
</feature>
<feature type="binding site" evidence="1">
    <location>
        <position position="60"/>
    </location>
    <ligand>
        <name>Mn(2+)</name>
        <dbReference type="ChEBI" id="CHEBI:29035"/>
        <label>2</label>
    </ligand>
</feature>
<feature type="binding site" evidence="1">
    <location>
        <position position="128"/>
    </location>
    <ligand>
        <name>Mn(2+)</name>
        <dbReference type="ChEBI" id="CHEBI:29035"/>
        <label>2</label>
    </ligand>
</feature>
<feature type="binding site" evidence="1">
    <location>
        <position position="217"/>
    </location>
    <ligand>
        <name>Mn(2+)</name>
        <dbReference type="ChEBI" id="CHEBI:29035"/>
        <label>2</label>
    </ligand>
</feature>
<feature type="binding site" evidence="1">
    <location>
        <position position="245"/>
    </location>
    <ligand>
        <name>Mn(2+)</name>
        <dbReference type="ChEBI" id="CHEBI:29035"/>
        <label>2</label>
    </ligand>
</feature>
<feature type="binding site" evidence="1">
    <location>
        <position position="247"/>
    </location>
    <ligand>
        <name>Mn(2+)</name>
        <dbReference type="ChEBI" id="CHEBI:29035"/>
        <label>1</label>
    </ligand>
</feature>
<feature type="modified residue" description="N-acetylserine" evidence="1">
    <location>
        <position position="2"/>
    </location>
</feature>
<feature type="modified residue" description="Phosphoserine" evidence="15 16">
    <location>
        <position position="2"/>
    </location>
</feature>
<feature type="modified residue" description="Phosphoserine" evidence="1">
    <location>
        <position position="275"/>
    </location>
</feature>
<feature type="modified residue" description="Asymmetric dimethylarginine" evidence="1">
    <location>
        <position position="570"/>
    </location>
</feature>
<feature type="modified residue" description="Asymmetric dimethylarginine" evidence="1">
    <location>
        <position position="572"/>
    </location>
</feature>
<feature type="modified residue" description="Asymmetric dimethylarginine" evidence="1">
    <location>
        <position position="574"/>
    </location>
</feature>
<feature type="modified residue" description="Asymmetric dimethylarginine" evidence="1">
    <location>
        <position position="576"/>
    </location>
</feature>
<feature type="modified residue" description="Asymmetric dimethylarginine" evidence="1">
    <location>
        <position position="577"/>
    </location>
</feature>
<feature type="modified residue" description="Asymmetric dimethylarginine" evidence="1">
    <location>
        <position position="580"/>
    </location>
</feature>
<feature type="modified residue" description="Asymmetric dimethylarginine" evidence="1">
    <location>
        <position position="587"/>
    </location>
</feature>
<feature type="modified residue" description="Asymmetric dimethylarginine" evidence="1">
    <location>
        <position position="592"/>
    </location>
</feature>
<feature type="modified residue" description="Asymmetric dimethylarginine" evidence="1">
    <location>
        <position position="594"/>
    </location>
</feature>
<feature type="modified residue" description="Phosphoserine" evidence="1">
    <location>
        <position position="618"/>
    </location>
</feature>
<feature type="modified residue" description="Phosphoserine" evidence="16">
    <location>
        <position position="640"/>
    </location>
</feature>
<feature type="modified residue" description="Phosphoserine" evidence="16">
    <location>
        <position position="648"/>
    </location>
</feature>
<feature type="modified residue" description="N6-lactoyllysine" evidence="1">
    <location>
        <position position="671"/>
    </location>
</feature>
<feature type="modified residue" description="Phosphoserine" evidence="1">
    <location>
        <position position="674"/>
    </location>
</feature>
<feature type="modified residue" description="Phosphoserine" evidence="1">
    <location>
        <position position="676"/>
    </location>
</feature>
<feature type="modified residue" description="Phosphoserine" evidence="16">
    <location>
        <position position="686"/>
    </location>
</feature>
<feature type="modified residue" description="Phosphoserine" evidence="1">
    <location>
        <position position="699"/>
    </location>
</feature>
<feature type="cross-link" description="Glycyl lysine isopeptide (Lys-Gly) (interchain with G-Cter in SUMO2)" evidence="1">
    <location>
        <position position="255"/>
    </location>
</feature>
<feature type="cross-link" description="Glycyl lysine isopeptide (Lys-Gly) (interchain with G-Cter in UFM1)" evidence="1">
    <location>
        <position position="282"/>
    </location>
</feature>
<feature type="cross-link" description="Glycyl lysine isopeptide (Lys-Gly) (interchain with G-Cter in ubiquitin)" evidence="1">
    <location>
        <position position="339"/>
    </location>
</feature>
<feature type="cross-link" description="Glycyl lysine isopeptide (Lys-Gly) (interchain with G-Cter in SUMO)" evidence="1">
    <location>
        <position position="384"/>
    </location>
</feature>
<feature type="cross-link" description="Glycyl lysine isopeptide (Lys-Gly) (interchain with G-Cter in SUMO)" evidence="1">
    <location>
        <position position="468"/>
    </location>
</feature>
<feature type="cross-link" description="Glycyl lysine isopeptide (Lys-Gly) (interchain with G-Cter in ubiquitin)" evidence="1">
    <location>
        <position position="481"/>
    </location>
</feature>
<feature type="splice variant" id="VSP_003263" description="In isoform 2." evidence="11">
    <location>
        <begin position="340"/>
        <end position="366"/>
    </location>
</feature>
<feature type="mutagenesis site" description="Knockin mice show early embryonic lethality and genomic instability." evidence="5">
    <original>H</original>
    <variation>N</variation>
    <location>
        <position position="129"/>
    </location>
</feature>
<feature type="mutagenesis site" description="Knockin mice show defects in ATM-dependent DNA repair. Female mice display subfertility due to defects in progression of meiotic prophase." evidence="3">
    <location>
        <begin position="632"/>
        <end position="706"/>
    </location>
</feature>
<reference key="1">
    <citation type="submission" date="1996-05" db="EMBL/GenBank/DDBJ databases">
        <authorList>
            <person name="Oshiumi H."/>
            <person name="Shinohara A."/>
            <person name="Ogawa H."/>
        </authorList>
    </citation>
    <scope>NUCLEOTIDE SEQUENCE [MRNA] (ISOFORMS 1 AND 2)</scope>
    <source>
        <strain>CD-1</strain>
        <tissue>Testis</tissue>
    </source>
</reference>
<reference key="2">
    <citation type="journal article" date="2004" name="Genome Res.">
        <title>The status, quality, and expansion of the NIH full-length cDNA project: the Mammalian Gene Collection (MGC).</title>
        <authorList>
            <consortium name="The MGC Project Team"/>
        </authorList>
    </citation>
    <scope>NUCLEOTIDE SEQUENCE [LARGE SCALE MRNA] (ISOFORM 1)</scope>
    <source>
        <strain>C57BL/6J</strain>
        <tissue>Retina</tissue>
    </source>
</reference>
<reference key="3">
    <citation type="journal article" date="1997" name="Nucleic Acids Res.">
        <title>Conditional gene targeted deletion by Cre recombinase demonstrates the requirement for the double-strand break repair Mre11 protein in murine embryonic stem cells.</title>
        <authorList>
            <person name="Xiao Y."/>
            <person name="Weaver D.T."/>
        </authorList>
    </citation>
    <scope>DISRUPTION PHENOTYPE</scope>
</reference>
<reference key="4">
    <citation type="journal article" date="2003" name="Mol. Cell">
        <title>Checkpoint failure and chromosomal instability without lymphomagenesis in Mre11(ATLD1/ATLD1) mice.</title>
        <authorList>
            <person name="Theunissen J.W."/>
            <person name="Kaplan M.I."/>
            <person name="Hunt P.A."/>
            <person name="Williams B.R."/>
            <person name="Ferguson D.O."/>
            <person name="Alt F.W."/>
            <person name="Petrini J.H."/>
        </authorList>
    </citation>
    <scope>FUNCTION</scope>
    <scope>MUTAGENESIS OF 632-ARG--ARG-706</scope>
</reference>
<reference key="5">
    <citation type="journal article" date="2007" name="Curr. Biol.">
        <title>The Mre11 complex influences DNA repair, synapsis, and crossing over in murine meiosis.</title>
        <authorList>
            <person name="Cherry S.M."/>
            <person name="Adelman C.A."/>
            <person name="Theunissen J.W."/>
            <person name="Hassold T.J."/>
            <person name="Hunt P.A."/>
            <person name="Petrini J.H."/>
        </authorList>
    </citation>
    <scope>FUNCTION</scope>
    <scope>MUTAGENESIS OF 632-ARG--ARG-706</scope>
</reference>
<reference key="6">
    <citation type="journal article" date="2007" name="Proc. Natl. Acad. Sci. U.S.A.">
        <title>Large-scale phosphorylation analysis of mouse liver.</title>
        <authorList>
            <person name="Villen J."/>
            <person name="Beausoleil S.A."/>
            <person name="Gerber S.A."/>
            <person name="Gygi S.P."/>
        </authorList>
    </citation>
    <scope>PHOSPHORYLATION [LARGE SCALE ANALYSIS] AT SER-2</scope>
    <scope>IDENTIFICATION BY MASS SPECTROMETRY [LARGE SCALE ANALYSIS]</scope>
    <source>
        <tissue>Liver</tissue>
    </source>
</reference>
<reference key="7">
    <citation type="journal article" date="2008" name="Cell">
        <title>Mre11 nuclease activity has essential roles in DNA repair and genomic stability distinct from ATM activation.</title>
        <authorList>
            <person name="Buis J."/>
            <person name="Wu Y."/>
            <person name="Deng Y."/>
            <person name="Leddon J."/>
            <person name="Westfield G."/>
            <person name="Eckersdorff M."/>
            <person name="Sekiguchi J.M."/>
            <person name="Chang S."/>
            <person name="Ferguson D.O."/>
        </authorList>
    </citation>
    <scope>FUNCTION</scope>
    <scope>DISRUPTION PHENOTYPE</scope>
    <scope>ACTIVE SITE</scope>
    <scope>MUTAGENESIS OF HIS-129</scope>
</reference>
<reference key="8">
    <citation type="journal article" date="2010" name="Cell">
        <title>A tissue-specific atlas of mouse protein phosphorylation and expression.</title>
        <authorList>
            <person name="Huttlin E.L."/>
            <person name="Jedrychowski M.P."/>
            <person name="Elias J.E."/>
            <person name="Goswami T."/>
            <person name="Rad R."/>
            <person name="Beausoleil S.A."/>
            <person name="Villen J."/>
            <person name="Haas W."/>
            <person name="Sowa M.E."/>
            <person name="Gygi S.P."/>
        </authorList>
    </citation>
    <scope>PHOSPHORYLATION [LARGE SCALE ANALYSIS] AT SER-2; SER-640; SER-648 AND SER-686</scope>
    <scope>IDENTIFICATION BY MASS SPECTROMETRY [LARGE SCALE ANALYSIS]</scope>
    <source>
        <tissue>Brain</tissue>
        <tissue>Brown adipose tissue</tissue>
        <tissue>Heart</tissue>
        <tissue>Kidney</tissue>
        <tissue>Liver</tissue>
        <tissue>Lung</tissue>
        <tissue>Pancreas</tissue>
        <tissue>Spleen</tissue>
        <tissue>Testis</tissue>
    </source>
</reference>
<reference key="9">
    <citation type="journal article" date="2017" name="Nucleic Acids Res.">
        <title>Homeostatic nuclear RAGE-ATM interaction is essential for efficient DNA repair.</title>
        <authorList>
            <person name="Kumar V."/>
            <person name="Fleming T."/>
            <person name="Terjung S."/>
            <person name="Gorzelanny C."/>
            <person name="Gebhardt C."/>
            <person name="Agrawal R."/>
            <person name="Mall M.A."/>
            <person name="Ranzinger J."/>
            <person name="Zeier M."/>
            <person name="Madhusudhan T."/>
            <person name="Ranjan S."/>
            <person name="Isermann B."/>
            <person name="Liesz A."/>
            <person name="Deshpande D."/>
            <person name="Haering H.U."/>
            <person name="Biswas S.K."/>
            <person name="Reynolds P.R."/>
            <person name="Hammes H.P."/>
            <person name="Peperkok R."/>
            <person name="Angel P."/>
            <person name="Herzig S."/>
            <person name="Nawroth P.P."/>
        </authorList>
    </citation>
    <scope>FUNCTION</scope>
    <scope>INTERACTION WITH AGER</scope>
</reference>
<reference key="10">
    <citation type="journal article" date="2018" name="Mol. Cell">
        <title>MRI is a DNA damage response adaptor during classical non-homologous end joining.</title>
        <authorList>
            <person name="Hung P.J."/>
            <person name="Johnson B."/>
            <person name="Chen B.R."/>
            <person name="Byrum A.K."/>
            <person name="Bredemeyer A.L."/>
            <person name="Yewdell W.T."/>
            <person name="Johnson T.E."/>
            <person name="Lee B.J."/>
            <person name="Deivasigamani S."/>
            <person name="Hindi I."/>
            <person name="Amatya P."/>
            <person name="Gross M.L."/>
            <person name="Paull T.T."/>
            <person name="Pisapia D.J."/>
            <person name="Chaudhuri J."/>
            <person name="Petrini J.J.H."/>
            <person name="Mosammaparast N."/>
            <person name="Amarasinghe G.K."/>
            <person name="Zha S."/>
            <person name="Tyler J.K."/>
            <person name="Sleckman B.P."/>
        </authorList>
    </citation>
    <scope>INTERACTION WITH CYREN</scope>
</reference>
<reference key="11">
    <citation type="journal article" date="2024" name="Nature">
        <title>MRE11 liberates cGAS from nucleosome sequestration during tumorigenesis.</title>
        <authorList>
            <person name="Cho M.G."/>
            <person name="Kumar R.J."/>
            <person name="Lin C.C."/>
            <person name="Boyer J.A."/>
            <person name="Shahir J.A."/>
            <person name="Fagan-Solis K."/>
            <person name="Simpson D.A."/>
            <person name="Fan C."/>
            <person name="Foster C.E."/>
            <person name="Goddard A.M."/>
            <person name="Lerner L.M."/>
            <person name="Ellington S.W."/>
            <person name="Wang Q."/>
            <person name="Wang Y."/>
            <person name="Ho A.Y."/>
            <person name="Liu P."/>
            <person name="Perou C.M."/>
            <person name="Zhang Q."/>
            <person name="McGinty R.K."/>
            <person name="Purvis J.E."/>
            <person name="Gupta G.P."/>
        </authorList>
    </citation>
    <scope>FUNCTION</scope>
</reference>
<organism>
    <name type="scientific">Mus musculus</name>
    <name type="common">Mouse</name>
    <dbReference type="NCBI Taxonomy" id="10090"/>
    <lineage>
        <taxon>Eukaryota</taxon>
        <taxon>Metazoa</taxon>
        <taxon>Chordata</taxon>
        <taxon>Craniata</taxon>
        <taxon>Vertebrata</taxon>
        <taxon>Euteleostomi</taxon>
        <taxon>Mammalia</taxon>
        <taxon>Eutheria</taxon>
        <taxon>Euarchontoglires</taxon>
        <taxon>Glires</taxon>
        <taxon>Rodentia</taxon>
        <taxon>Myomorpha</taxon>
        <taxon>Muroidea</taxon>
        <taxon>Muridae</taxon>
        <taxon>Murinae</taxon>
        <taxon>Mus</taxon>
        <taxon>Mus</taxon>
    </lineage>
</organism>
<proteinExistence type="evidence at protein level"/>
<dbReference type="EC" id="3.1.-.-" evidence="5"/>
<dbReference type="EMBL" id="U58987">
    <property type="protein sequence ID" value="AAB04955.1"/>
    <property type="molecule type" value="mRNA"/>
</dbReference>
<dbReference type="EMBL" id="U60318">
    <property type="protein sequence ID" value="AAB03664.1"/>
    <property type="molecule type" value="mRNA"/>
</dbReference>
<dbReference type="EMBL" id="BC065144">
    <property type="protein sequence ID" value="AAH65144.1"/>
    <property type="molecule type" value="mRNA"/>
</dbReference>
<dbReference type="CCDS" id="CCDS22827.1">
    <molecule id="Q61216-1"/>
</dbReference>
<dbReference type="CCDS" id="CCDS80958.1">
    <molecule id="Q61216-2"/>
</dbReference>
<dbReference type="RefSeq" id="NP_001297657.1">
    <molecule id="Q61216-2"/>
    <property type="nucleotide sequence ID" value="NM_001310728.1"/>
</dbReference>
<dbReference type="RefSeq" id="NP_061206.1">
    <molecule id="Q61216-1"/>
    <property type="nucleotide sequence ID" value="NM_018736.3"/>
</dbReference>
<dbReference type="RefSeq" id="XP_006510111.1">
    <property type="nucleotide sequence ID" value="XM_006510048.2"/>
</dbReference>
<dbReference type="RefSeq" id="XP_006510112.1">
    <property type="nucleotide sequence ID" value="XM_006510049.2"/>
</dbReference>
<dbReference type="SMR" id="Q61216"/>
<dbReference type="BioGRID" id="201486">
    <property type="interactions" value="14"/>
</dbReference>
<dbReference type="ComplexPortal" id="CPX-4703">
    <property type="entry name" value="MRN double-strand break repair complex"/>
</dbReference>
<dbReference type="DIP" id="DIP-46803N"/>
<dbReference type="FunCoup" id="Q61216">
    <property type="interactions" value="3837"/>
</dbReference>
<dbReference type="IntAct" id="Q61216">
    <property type="interactions" value="4"/>
</dbReference>
<dbReference type="STRING" id="10090.ENSMUSP00000034405"/>
<dbReference type="GlyGen" id="Q61216">
    <property type="glycosylation" value="1 site, 1 N-linked glycan (1 site)"/>
</dbReference>
<dbReference type="iPTMnet" id="Q61216"/>
<dbReference type="PhosphoSitePlus" id="Q61216"/>
<dbReference type="jPOST" id="Q61216"/>
<dbReference type="PaxDb" id="10090-ENSMUSP00000034405"/>
<dbReference type="ProteomicsDB" id="290057">
    <molecule id="Q61216-1"/>
</dbReference>
<dbReference type="ProteomicsDB" id="290058">
    <molecule id="Q61216-2"/>
</dbReference>
<dbReference type="Pumba" id="Q61216"/>
<dbReference type="Antibodypedia" id="706">
    <property type="antibodies" value="696 antibodies from 43 providers"/>
</dbReference>
<dbReference type="DNASU" id="17535"/>
<dbReference type="Ensembl" id="ENSMUST00000034405.11">
    <molecule id="Q61216-1"/>
    <property type="protein sequence ID" value="ENSMUSP00000034405.5"/>
    <property type="gene ID" value="ENSMUSG00000031928.16"/>
</dbReference>
<dbReference type="Ensembl" id="ENSMUST00000115632.10">
    <molecule id="Q61216-2"/>
    <property type="protein sequence ID" value="ENSMUSP00000111295.4"/>
    <property type="gene ID" value="ENSMUSG00000031928.16"/>
</dbReference>
<dbReference type="GeneID" id="17535"/>
<dbReference type="KEGG" id="mmu:17535"/>
<dbReference type="UCSC" id="uc009ofc.1">
    <molecule id="Q61216-1"/>
    <property type="organism name" value="mouse"/>
</dbReference>
<dbReference type="UCSC" id="uc009ofd.1">
    <molecule id="Q61216-2"/>
    <property type="organism name" value="mouse"/>
</dbReference>
<dbReference type="AGR" id="MGI:1100512"/>
<dbReference type="CTD" id="17535"/>
<dbReference type="MGI" id="MGI:1100512">
    <property type="gene designation" value="Mre11a"/>
</dbReference>
<dbReference type="VEuPathDB" id="HostDB:ENSMUSG00000031928"/>
<dbReference type="eggNOG" id="KOG2310">
    <property type="taxonomic scope" value="Eukaryota"/>
</dbReference>
<dbReference type="GeneTree" id="ENSGT00390000017288"/>
<dbReference type="HOGENOM" id="CLU_009535_3_1_1"/>
<dbReference type="InParanoid" id="Q61216"/>
<dbReference type="OMA" id="ESCMFNA"/>
<dbReference type="OrthoDB" id="30417at2759"/>
<dbReference type="PhylomeDB" id="Q61216"/>
<dbReference type="TreeFam" id="TF101105"/>
<dbReference type="Reactome" id="R-MMU-1834949">
    <property type="pathway name" value="Cytosolic sensors of pathogen-associated DNA"/>
</dbReference>
<dbReference type="Reactome" id="R-MMU-2559586">
    <property type="pathway name" value="DNA Damage/Telomere Stress Induced Senescence"/>
</dbReference>
<dbReference type="Reactome" id="R-MMU-5685938">
    <property type="pathway name" value="HDR through Single Strand Annealing (SSA)"/>
</dbReference>
<dbReference type="Reactome" id="R-MMU-5685939">
    <property type="pathway name" value="HDR through MMEJ (alt-NHEJ)"/>
</dbReference>
<dbReference type="Reactome" id="R-MMU-5685942">
    <property type="pathway name" value="HDR through Homologous Recombination (HRR)"/>
</dbReference>
<dbReference type="Reactome" id="R-MMU-5693548">
    <property type="pathway name" value="Sensing of DNA Double Strand Breaks"/>
</dbReference>
<dbReference type="Reactome" id="R-MMU-5693565">
    <property type="pathway name" value="Recruitment and ATM-mediated phosphorylation of repair and signaling proteins at DNA double strand breaks"/>
</dbReference>
<dbReference type="Reactome" id="R-MMU-5693568">
    <property type="pathway name" value="Resolution of D-loop Structures through Holliday Junction Intermediates"/>
</dbReference>
<dbReference type="Reactome" id="R-MMU-5693571">
    <property type="pathway name" value="Nonhomologous End-Joining (NHEJ)"/>
</dbReference>
<dbReference type="Reactome" id="R-MMU-5693579">
    <property type="pathway name" value="Homologous DNA Pairing and Strand Exchange"/>
</dbReference>
<dbReference type="Reactome" id="R-MMU-5693607">
    <property type="pathway name" value="Processing of DNA double-strand break ends"/>
</dbReference>
<dbReference type="Reactome" id="R-MMU-5693616">
    <property type="pathway name" value="Presynaptic phase of homologous DNA pairing and strand exchange"/>
</dbReference>
<dbReference type="Reactome" id="R-MMU-6804756">
    <property type="pathway name" value="Regulation of TP53 Activity through Phosphorylation"/>
</dbReference>
<dbReference type="Reactome" id="R-MMU-69473">
    <property type="pathway name" value="G2/M DNA damage checkpoint"/>
</dbReference>
<dbReference type="BioGRID-ORCS" id="17535">
    <property type="hits" value="30 hits in 111 CRISPR screens"/>
</dbReference>
<dbReference type="ChiTaRS" id="Mre11a">
    <property type="organism name" value="mouse"/>
</dbReference>
<dbReference type="PRO" id="PR:Q61216"/>
<dbReference type="Proteomes" id="UP000000589">
    <property type="component" value="Chromosome 9"/>
</dbReference>
<dbReference type="RNAct" id="Q61216">
    <property type="molecule type" value="protein"/>
</dbReference>
<dbReference type="Bgee" id="ENSMUSG00000031928">
    <property type="expression patterns" value="Expressed in ectoderm and 235 other cell types or tissues"/>
</dbReference>
<dbReference type="ExpressionAtlas" id="Q61216">
    <property type="expression patterns" value="baseline and differential"/>
</dbReference>
<dbReference type="GO" id="GO:0070533">
    <property type="term" value="C:BRCA1-C complex"/>
    <property type="evidence" value="ECO:0000266"/>
    <property type="project" value="ComplexPortal"/>
</dbReference>
<dbReference type="GO" id="GO:0098687">
    <property type="term" value="C:chromosomal region"/>
    <property type="evidence" value="ECO:0000303"/>
    <property type="project" value="ComplexPortal"/>
</dbReference>
<dbReference type="GO" id="GO:0000781">
    <property type="term" value="C:chromosome, telomeric region"/>
    <property type="evidence" value="ECO:0007669"/>
    <property type="project" value="UniProtKB-SubCell"/>
</dbReference>
<dbReference type="GO" id="GO:0005737">
    <property type="term" value="C:cytoplasm"/>
    <property type="evidence" value="ECO:0007669"/>
    <property type="project" value="Ensembl"/>
</dbReference>
<dbReference type="GO" id="GO:0030870">
    <property type="term" value="C:Mre11 complex"/>
    <property type="evidence" value="ECO:0000314"/>
    <property type="project" value="UniProtKB"/>
</dbReference>
<dbReference type="GO" id="GO:0005634">
    <property type="term" value="C:nucleus"/>
    <property type="evidence" value="ECO:0000314"/>
    <property type="project" value="MGI"/>
</dbReference>
<dbReference type="GO" id="GO:0016605">
    <property type="term" value="C:PML body"/>
    <property type="evidence" value="ECO:0000314"/>
    <property type="project" value="BHF-UCL"/>
</dbReference>
<dbReference type="GO" id="GO:0005657">
    <property type="term" value="C:replication fork"/>
    <property type="evidence" value="ECO:0000250"/>
    <property type="project" value="UniProtKB"/>
</dbReference>
<dbReference type="GO" id="GO:0035861">
    <property type="term" value="C:site of double-strand break"/>
    <property type="evidence" value="ECO:0000250"/>
    <property type="project" value="UniProtKB"/>
</dbReference>
<dbReference type="GO" id="GO:0008408">
    <property type="term" value="F:3'-5' exonuclease activity"/>
    <property type="evidence" value="ECO:0000250"/>
    <property type="project" value="UniProtKB"/>
</dbReference>
<dbReference type="GO" id="GO:0008296">
    <property type="term" value="F:3'-5'-DNA exonuclease activity"/>
    <property type="evidence" value="ECO:0007669"/>
    <property type="project" value="Ensembl"/>
</dbReference>
<dbReference type="GO" id="GO:0003677">
    <property type="term" value="F:DNA binding"/>
    <property type="evidence" value="ECO:0007669"/>
    <property type="project" value="Ensembl"/>
</dbReference>
<dbReference type="GO" id="GO:0004520">
    <property type="term" value="F:DNA endonuclease activity"/>
    <property type="evidence" value="ECO:0000250"/>
    <property type="project" value="UniProtKB"/>
</dbReference>
<dbReference type="GO" id="GO:0003678">
    <property type="term" value="F:DNA helicase activity"/>
    <property type="evidence" value="ECO:0007669"/>
    <property type="project" value="Ensembl"/>
</dbReference>
<dbReference type="GO" id="GO:0042802">
    <property type="term" value="F:identical protein binding"/>
    <property type="evidence" value="ECO:0007669"/>
    <property type="project" value="Ensembl"/>
</dbReference>
<dbReference type="GO" id="GO:0030145">
    <property type="term" value="F:manganese ion binding"/>
    <property type="evidence" value="ECO:0007669"/>
    <property type="project" value="InterPro"/>
</dbReference>
<dbReference type="GO" id="GO:0004518">
    <property type="term" value="F:nuclease activity"/>
    <property type="evidence" value="ECO:0000315"/>
    <property type="project" value="UniProtKB"/>
</dbReference>
<dbReference type="GO" id="GO:0000014">
    <property type="term" value="F:single-stranded DNA endodeoxyribonuclease activity"/>
    <property type="evidence" value="ECO:0007669"/>
    <property type="project" value="Ensembl"/>
</dbReference>
<dbReference type="GO" id="GO:0008283">
    <property type="term" value="P:cell population proliferation"/>
    <property type="evidence" value="ECO:0000315"/>
    <property type="project" value="MGI"/>
</dbReference>
<dbReference type="GO" id="GO:0051276">
    <property type="term" value="P:chromosome organization"/>
    <property type="evidence" value="ECO:0000315"/>
    <property type="project" value="UniProtKB"/>
</dbReference>
<dbReference type="GO" id="GO:0006974">
    <property type="term" value="P:DNA damage response"/>
    <property type="evidence" value="ECO:0000250"/>
    <property type="project" value="UniProtKB"/>
</dbReference>
<dbReference type="GO" id="GO:0000729">
    <property type="term" value="P:DNA double-strand break processing"/>
    <property type="evidence" value="ECO:0000303"/>
    <property type="project" value="ComplexPortal"/>
</dbReference>
<dbReference type="GO" id="GO:0110025">
    <property type="term" value="P:DNA strand resection involved in replication fork processing"/>
    <property type="evidence" value="ECO:0000315"/>
    <property type="project" value="UniProtKB"/>
</dbReference>
<dbReference type="GO" id="GO:0006302">
    <property type="term" value="P:double-strand break repair"/>
    <property type="evidence" value="ECO:0000315"/>
    <property type="project" value="MGI"/>
</dbReference>
<dbReference type="GO" id="GO:0000724">
    <property type="term" value="P:double-strand break repair via homologous recombination"/>
    <property type="evidence" value="ECO:0000315"/>
    <property type="project" value="UniProtKB"/>
</dbReference>
<dbReference type="GO" id="GO:0006303">
    <property type="term" value="P:double-strand break repair via nonhomologous end joining"/>
    <property type="evidence" value="ECO:0000250"/>
    <property type="project" value="UniProtKB"/>
</dbReference>
<dbReference type="GO" id="GO:0007129">
    <property type="term" value="P:homologous chromosome pairing at meiosis"/>
    <property type="evidence" value="ECO:0000315"/>
    <property type="project" value="MGI"/>
</dbReference>
<dbReference type="GO" id="GO:0035825">
    <property type="term" value="P:homologous recombination"/>
    <property type="evidence" value="ECO:0000303"/>
    <property type="project" value="ComplexPortal"/>
</dbReference>
<dbReference type="GO" id="GO:0007095">
    <property type="term" value="P:mitotic G2 DNA damage checkpoint signaling"/>
    <property type="evidence" value="ECO:0000315"/>
    <property type="project" value="MGI"/>
</dbReference>
<dbReference type="GO" id="GO:0044818">
    <property type="term" value="P:mitotic G2/M transition checkpoint"/>
    <property type="evidence" value="ECO:0000303"/>
    <property type="project" value="ComplexPortal"/>
</dbReference>
<dbReference type="GO" id="GO:0031573">
    <property type="term" value="P:mitotic intra-S DNA damage checkpoint signaling"/>
    <property type="evidence" value="ECO:0000315"/>
    <property type="project" value="MGI"/>
</dbReference>
<dbReference type="GO" id="GO:0043066">
    <property type="term" value="P:negative regulation of apoptotic process"/>
    <property type="evidence" value="ECO:0007669"/>
    <property type="project" value="Ensembl"/>
</dbReference>
<dbReference type="GO" id="GO:2001033">
    <property type="term" value="P:negative regulation of double-strand break repair via nonhomologous end joining"/>
    <property type="evidence" value="ECO:0000250"/>
    <property type="project" value="UniProtKB"/>
</dbReference>
<dbReference type="GO" id="GO:2000781">
    <property type="term" value="P:positive regulation of double-strand break repair"/>
    <property type="evidence" value="ECO:0007669"/>
    <property type="project" value="Ensembl"/>
</dbReference>
<dbReference type="GO" id="GO:0032206">
    <property type="term" value="P:positive regulation of telomere maintenance"/>
    <property type="evidence" value="ECO:0007669"/>
    <property type="project" value="Ensembl"/>
</dbReference>
<dbReference type="GO" id="GO:0062176">
    <property type="term" value="P:R-loop processing"/>
    <property type="evidence" value="ECO:0000250"/>
    <property type="project" value="UniProtKB"/>
</dbReference>
<dbReference type="GO" id="GO:0007062">
    <property type="term" value="P:sister chromatid cohesion"/>
    <property type="evidence" value="ECO:0007669"/>
    <property type="project" value="Ensembl"/>
</dbReference>
<dbReference type="GO" id="GO:0031860">
    <property type="term" value="P:telomeric 3' overhang formation"/>
    <property type="evidence" value="ECO:0007669"/>
    <property type="project" value="Ensembl"/>
</dbReference>
<dbReference type="CDD" id="cd00840">
    <property type="entry name" value="MPP_Mre11_N"/>
    <property type="match status" value="1"/>
</dbReference>
<dbReference type="FunFam" id="3.30.110.110:FF:000001">
    <property type="entry name" value="Double-strand break repair protein"/>
    <property type="match status" value="1"/>
</dbReference>
<dbReference type="FunFam" id="3.60.21.10:FF:000011">
    <property type="entry name" value="Double-strand break repair protein"/>
    <property type="match status" value="1"/>
</dbReference>
<dbReference type="Gene3D" id="3.60.21.10">
    <property type="match status" value="1"/>
</dbReference>
<dbReference type="Gene3D" id="3.30.110.110">
    <property type="entry name" value="Mre11, capping domain"/>
    <property type="match status" value="1"/>
</dbReference>
<dbReference type="InterPro" id="IPR004843">
    <property type="entry name" value="Calcineurin-like_PHP_ApaH"/>
</dbReference>
<dbReference type="InterPro" id="IPR029052">
    <property type="entry name" value="Metallo-depent_PP-like"/>
</dbReference>
<dbReference type="InterPro" id="IPR003701">
    <property type="entry name" value="Mre11"/>
</dbReference>
<dbReference type="InterPro" id="IPR038487">
    <property type="entry name" value="Mre11_capping_dom"/>
</dbReference>
<dbReference type="InterPro" id="IPR007281">
    <property type="entry name" value="Mre11_DNA-bd"/>
</dbReference>
<dbReference type="InterPro" id="IPR041796">
    <property type="entry name" value="Mre11_N"/>
</dbReference>
<dbReference type="NCBIfam" id="TIGR00583">
    <property type="entry name" value="mre11"/>
    <property type="match status" value="1"/>
</dbReference>
<dbReference type="PANTHER" id="PTHR10139">
    <property type="entry name" value="DOUBLE-STRAND BREAK REPAIR PROTEIN MRE11"/>
    <property type="match status" value="1"/>
</dbReference>
<dbReference type="PANTHER" id="PTHR10139:SF1">
    <property type="entry name" value="DOUBLE-STRAND BREAK REPAIR PROTEIN MRE11"/>
    <property type="match status" value="1"/>
</dbReference>
<dbReference type="Pfam" id="PF00149">
    <property type="entry name" value="Metallophos"/>
    <property type="match status" value="1"/>
</dbReference>
<dbReference type="Pfam" id="PF04152">
    <property type="entry name" value="Mre11_DNA_bind"/>
    <property type="match status" value="1"/>
</dbReference>
<dbReference type="PIRSF" id="PIRSF000882">
    <property type="entry name" value="DSB_repair_MRE11"/>
    <property type="match status" value="1"/>
</dbReference>
<dbReference type="SMART" id="SM01347">
    <property type="entry name" value="Mre11_DNA_bind"/>
    <property type="match status" value="1"/>
</dbReference>
<dbReference type="SUPFAM" id="SSF56300">
    <property type="entry name" value="Metallo-dependent phosphatases"/>
    <property type="match status" value="1"/>
</dbReference>